<name>TBB2_ECHMU</name>
<accession>Q9NFZ6</accession>
<reference key="1">
    <citation type="journal article" date="2000" name="Mol. Biochem. Parasitol.">
        <title>Cloning and characterization of beta-tubulin genes from Echinococcus multilocularis.</title>
        <authorList>
            <person name="Brehm K."/>
            <person name="Kronthaler K."/>
            <person name="Jura H."/>
            <person name="Frosch M."/>
        </authorList>
    </citation>
    <scope>NUCLEOTIDE SEQUENCE [GENOMIC DNA]</scope>
    <source>
        <strain>H-95</strain>
    </source>
</reference>
<proteinExistence type="inferred from homology"/>
<dbReference type="EMBL" id="AJ249549">
    <property type="protein sequence ID" value="CAB91641.1"/>
    <property type="molecule type" value="Genomic_DNA"/>
</dbReference>
<dbReference type="SMR" id="Q9NFZ6"/>
<dbReference type="eggNOG" id="KOG1375">
    <property type="taxonomic scope" value="Eukaryota"/>
</dbReference>
<dbReference type="OMA" id="MFFVEWI"/>
<dbReference type="OrthoDB" id="1662883at2759"/>
<dbReference type="GO" id="GO:0005737">
    <property type="term" value="C:cytoplasm"/>
    <property type="evidence" value="ECO:0007669"/>
    <property type="project" value="UniProtKB-KW"/>
</dbReference>
<dbReference type="GO" id="GO:0005874">
    <property type="term" value="C:microtubule"/>
    <property type="evidence" value="ECO:0007669"/>
    <property type="project" value="UniProtKB-KW"/>
</dbReference>
<dbReference type="GO" id="GO:0005525">
    <property type="term" value="F:GTP binding"/>
    <property type="evidence" value="ECO:0007669"/>
    <property type="project" value="UniProtKB-KW"/>
</dbReference>
<dbReference type="GO" id="GO:0003924">
    <property type="term" value="F:GTPase activity"/>
    <property type="evidence" value="ECO:0007669"/>
    <property type="project" value="InterPro"/>
</dbReference>
<dbReference type="GO" id="GO:0046872">
    <property type="term" value="F:metal ion binding"/>
    <property type="evidence" value="ECO:0007669"/>
    <property type="project" value="UniProtKB-KW"/>
</dbReference>
<dbReference type="GO" id="GO:0005200">
    <property type="term" value="F:structural constituent of cytoskeleton"/>
    <property type="evidence" value="ECO:0007669"/>
    <property type="project" value="InterPro"/>
</dbReference>
<dbReference type="GO" id="GO:0007017">
    <property type="term" value="P:microtubule-based process"/>
    <property type="evidence" value="ECO:0007669"/>
    <property type="project" value="InterPro"/>
</dbReference>
<dbReference type="CDD" id="cd02187">
    <property type="entry name" value="beta_tubulin"/>
    <property type="match status" value="1"/>
</dbReference>
<dbReference type="FunFam" id="1.10.287.600:FF:000006">
    <property type="entry name" value="Tubulin beta chain"/>
    <property type="match status" value="1"/>
</dbReference>
<dbReference type="FunFam" id="3.30.1330.20:FF:000002">
    <property type="entry name" value="Tubulin beta chain"/>
    <property type="match status" value="1"/>
</dbReference>
<dbReference type="FunFam" id="3.40.50.1440:FF:000003">
    <property type="entry name" value="Tubulin beta chain"/>
    <property type="match status" value="1"/>
</dbReference>
<dbReference type="Gene3D" id="1.10.287.600">
    <property type="entry name" value="Helix hairpin bin"/>
    <property type="match status" value="1"/>
</dbReference>
<dbReference type="Gene3D" id="3.30.1330.20">
    <property type="entry name" value="Tubulin/FtsZ, C-terminal domain"/>
    <property type="match status" value="1"/>
</dbReference>
<dbReference type="Gene3D" id="3.40.50.1440">
    <property type="entry name" value="Tubulin/FtsZ, GTPase domain"/>
    <property type="match status" value="1"/>
</dbReference>
<dbReference type="InterPro" id="IPR013838">
    <property type="entry name" value="Beta-tubulin_BS"/>
</dbReference>
<dbReference type="InterPro" id="IPR002453">
    <property type="entry name" value="Beta_tubulin"/>
</dbReference>
<dbReference type="InterPro" id="IPR008280">
    <property type="entry name" value="Tub_FtsZ_C"/>
</dbReference>
<dbReference type="InterPro" id="IPR000217">
    <property type="entry name" value="Tubulin"/>
</dbReference>
<dbReference type="InterPro" id="IPR037103">
    <property type="entry name" value="Tubulin/FtsZ-like_C"/>
</dbReference>
<dbReference type="InterPro" id="IPR018316">
    <property type="entry name" value="Tubulin/FtsZ_2-layer-sand-dom"/>
</dbReference>
<dbReference type="InterPro" id="IPR036525">
    <property type="entry name" value="Tubulin/FtsZ_GTPase_sf"/>
</dbReference>
<dbReference type="InterPro" id="IPR023123">
    <property type="entry name" value="Tubulin_C"/>
</dbReference>
<dbReference type="InterPro" id="IPR017975">
    <property type="entry name" value="Tubulin_CS"/>
</dbReference>
<dbReference type="InterPro" id="IPR003008">
    <property type="entry name" value="Tubulin_FtsZ_GTPase"/>
</dbReference>
<dbReference type="PANTHER" id="PTHR11588">
    <property type="entry name" value="TUBULIN"/>
    <property type="match status" value="1"/>
</dbReference>
<dbReference type="Pfam" id="PF00091">
    <property type="entry name" value="Tubulin"/>
    <property type="match status" value="1"/>
</dbReference>
<dbReference type="Pfam" id="PF03953">
    <property type="entry name" value="Tubulin_C"/>
    <property type="match status" value="1"/>
</dbReference>
<dbReference type="PRINTS" id="PR01163">
    <property type="entry name" value="BETATUBULIN"/>
</dbReference>
<dbReference type="PRINTS" id="PR01161">
    <property type="entry name" value="TUBULIN"/>
</dbReference>
<dbReference type="SMART" id="SM00864">
    <property type="entry name" value="Tubulin"/>
    <property type="match status" value="1"/>
</dbReference>
<dbReference type="SMART" id="SM00865">
    <property type="entry name" value="Tubulin_C"/>
    <property type="match status" value="1"/>
</dbReference>
<dbReference type="SUPFAM" id="SSF55307">
    <property type="entry name" value="Tubulin C-terminal domain-like"/>
    <property type="match status" value="1"/>
</dbReference>
<dbReference type="SUPFAM" id="SSF52490">
    <property type="entry name" value="Tubulin nucleotide-binding domain-like"/>
    <property type="match status" value="1"/>
</dbReference>
<dbReference type="PROSITE" id="PS00227">
    <property type="entry name" value="TUBULIN"/>
    <property type="match status" value="1"/>
</dbReference>
<dbReference type="PROSITE" id="PS00228">
    <property type="entry name" value="TUBULIN_B_AUTOREG"/>
    <property type="match status" value="1"/>
</dbReference>
<gene>
    <name type="primary">TUB-2</name>
</gene>
<sequence length="445" mass="49845">MREIVHIQAGQCGNQIGAKFWEVISDEHGIDPTGTYHGDSDLQLERINVYYNEASGGKYVPRAILVDLEPGTMDSVRAGPFGQIFRPDNFVFGQSGAGNNWAKGHYTEGAELVDSVLDVIRKEAESCDCLQGFQLTHSLGGGTGSGMGTLLISKIREEYPDRIMVTYSVVPSPKVSDTVVEPYNATLSVHQLVENTDETYCIDNEALYDICFRTLKLSNPTYGDLNHLVSATMSGVTTCLRFPGQLNADLRKLAVNMVPFPRLHFFMPGFAPLTSRGSQQYRALSVPELTQQMFDAKNMMAACDPRHGRYLTVAAIFRGRMSMKEVDEQMLNVQNKNSSYFVEWIPNNVKTAVCDIPPRGLKMSATFVGNSTAIQELFRRVSEQFTAMFRRKAFLHWYTGEGMDEMEFTEAESNMNDLVSEYQQYQDATAEDEGEFDEDEEVEEA</sequence>
<evidence type="ECO:0000250" key="1"/>
<evidence type="ECO:0000250" key="2">
    <source>
        <dbReference type="UniProtKB" id="P68363"/>
    </source>
</evidence>
<evidence type="ECO:0000250" key="3">
    <source>
        <dbReference type="UniProtKB" id="Q13509"/>
    </source>
</evidence>
<evidence type="ECO:0000256" key="4">
    <source>
        <dbReference type="SAM" id="MobiDB-lite"/>
    </source>
</evidence>
<evidence type="ECO:0000305" key="5"/>
<comment type="function">
    <text>Tubulin is the major constituent of microtubules, a cylinder consisting of laterally associated linear protofilaments composed of alpha- and beta-tubulin heterodimers. Microtubules grow by the addition of GTP-tubulin dimers to the microtubule end, where a stabilizing cap forms. Below the cap, tubulin dimers are in GDP-bound state, owing to GTPase activity of alpha-tubulin.</text>
</comment>
<comment type="cofactor">
    <cofactor evidence="2">
        <name>Mg(2+)</name>
        <dbReference type="ChEBI" id="CHEBI:18420"/>
    </cofactor>
</comment>
<comment type="subunit">
    <text>Dimer of alpha and beta chains. A typical microtubule is a hollow water-filled tube with an outer diameter of 25 nm and an inner diameter of 15 nM. Alpha-beta heterodimers associate head-to-tail to form protofilaments running lengthwise along the microtubule wall with the beta-tubulin subunit facing the microtubule plus end conferring a structural polarity. Microtubules usually have 13 protofilaments but different protofilament numbers can be found in some organisms and specialized cells.</text>
</comment>
<comment type="subcellular location">
    <subcellularLocation>
        <location evidence="1">Cytoplasm</location>
        <location evidence="1">Cytoskeleton</location>
    </subcellularLocation>
</comment>
<comment type="similarity">
    <text evidence="5">Belongs to the tubulin family.</text>
</comment>
<keyword id="KW-0963">Cytoplasm</keyword>
<keyword id="KW-0206">Cytoskeleton</keyword>
<keyword id="KW-0342">GTP-binding</keyword>
<keyword id="KW-0460">Magnesium</keyword>
<keyword id="KW-0479">Metal-binding</keyword>
<keyword id="KW-0493">Microtubule</keyword>
<keyword id="KW-0547">Nucleotide-binding</keyword>
<feature type="chain" id="PRO_0000048291" description="Tubulin beta-2 chain">
    <location>
        <begin position="1"/>
        <end position="445"/>
    </location>
</feature>
<feature type="region of interest" description="Disordered" evidence="4">
    <location>
        <begin position="424"/>
        <end position="445"/>
    </location>
</feature>
<feature type="compositionally biased region" description="Acidic residues" evidence="4">
    <location>
        <begin position="429"/>
        <end position="445"/>
    </location>
</feature>
<feature type="binding site" evidence="3">
    <location>
        <position position="11"/>
    </location>
    <ligand>
        <name>GTP</name>
        <dbReference type="ChEBI" id="CHEBI:37565"/>
    </ligand>
</feature>
<feature type="binding site" evidence="2">
    <location>
        <position position="69"/>
    </location>
    <ligand>
        <name>GTP</name>
        <dbReference type="ChEBI" id="CHEBI:37565"/>
    </ligand>
</feature>
<feature type="binding site" evidence="2">
    <location>
        <position position="69"/>
    </location>
    <ligand>
        <name>Mg(2+)</name>
        <dbReference type="ChEBI" id="CHEBI:18420"/>
    </ligand>
</feature>
<feature type="binding site" evidence="3">
    <location>
        <position position="138"/>
    </location>
    <ligand>
        <name>GTP</name>
        <dbReference type="ChEBI" id="CHEBI:37565"/>
    </ligand>
</feature>
<feature type="binding site" evidence="3">
    <location>
        <position position="142"/>
    </location>
    <ligand>
        <name>GTP</name>
        <dbReference type="ChEBI" id="CHEBI:37565"/>
    </ligand>
</feature>
<feature type="binding site" evidence="3">
    <location>
        <position position="143"/>
    </location>
    <ligand>
        <name>GTP</name>
        <dbReference type="ChEBI" id="CHEBI:37565"/>
    </ligand>
</feature>
<feature type="binding site" evidence="3">
    <location>
        <position position="144"/>
    </location>
    <ligand>
        <name>GTP</name>
        <dbReference type="ChEBI" id="CHEBI:37565"/>
    </ligand>
</feature>
<feature type="binding site" evidence="3">
    <location>
        <position position="204"/>
    </location>
    <ligand>
        <name>GTP</name>
        <dbReference type="ChEBI" id="CHEBI:37565"/>
    </ligand>
</feature>
<feature type="binding site" evidence="3">
    <location>
        <position position="226"/>
    </location>
    <ligand>
        <name>GTP</name>
        <dbReference type="ChEBI" id="CHEBI:37565"/>
    </ligand>
</feature>
<organism>
    <name type="scientific">Echinococcus multilocularis</name>
    <name type="common">Fox tapeworm</name>
    <dbReference type="NCBI Taxonomy" id="6211"/>
    <lineage>
        <taxon>Eukaryota</taxon>
        <taxon>Metazoa</taxon>
        <taxon>Spiralia</taxon>
        <taxon>Lophotrochozoa</taxon>
        <taxon>Platyhelminthes</taxon>
        <taxon>Cestoda</taxon>
        <taxon>Eucestoda</taxon>
        <taxon>Cyclophyllidea</taxon>
        <taxon>Taeniidae</taxon>
        <taxon>Echinococcus</taxon>
    </lineage>
</organism>
<protein>
    <recommendedName>
        <fullName>Tubulin beta-2 chain</fullName>
    </recommendedName>
    <alternativeName>
        <fullName>Beta-tubulin 2</fullName>
    </alternativeName>
</protein>